<keyword id="KW-0067">ATP-binding</keyword>
<keyword id="KW-0963">Cytoplasm</keyword>
<keyword id="KW-0324">Glycolysis</keyword>
<keyword id="KW-0418">Kinase</keyword>
<keyword id="KW-0547">Nucleotide-binding</keyword>
<keyword id="KW-1185">Reference proteome</keyword>
<keyword id="KW-0808">Transferase</keyword>
<evidence type="ECO:0000255" key="1">
    <source>
        <dbReference type="HAMAP-Rule" id="MF_00145"/>
    </source>
</evidence>
<dbReference type="EC" id="2.7.2.3" evidence="1"/>
<dbReference type="EMBL" id="CP000127">
    <property type="protein sequence ID" value="ABA59253.1"/>
    <property type="molecule type" value="Genomic_DNA"/>
</dbReference>
<dbReference type="RefSeq" id="WP_002812420.1">
    <property type="nucleotide sequence ID" value="NC_007484.1"/>
</dbReference>
<dbReference type="SMR" id="Q3J7E3"/>
<dbReference type="FunCoup" id="Q3J7E3">
    <property type="interactions" value="515"/>
</dbReference>
<dbReference type="STRING" id="323261.Noc_2806"/>
<dbReference type="KEGG" id="noc:Noc_2806"/>
<dbReference type="eggNOG" id="COG0126">
    <property type="taxonomic scope" value="Bacteria"/>
</dbReference>
<dbReference type="HOGENOM" id="CLU_025427_0_2_6"/>
<dbReference type="InParanoid" id="Q3J7E3"/>
<dbReference type="UniPathway" id="UPA00109">
    <property type="reaction ID" value="UER00185"/>
</dbReference>
<dbReference type="Proteomes" id="UP000006838">
    <property type="component" value="Chromosome"/>
</dbReference>
<dbReference type="GO" id="GO:0005829">
    <property type="term" value="C:cytosol"/>
    <property type="evidence" value="ECO:0007669"/>
    <property type="project" value="TreeGrafter"/>
</dbReference>
<dbReference type="GO" id="GO:0043531">
    <property type="term" value="F:ADP binding"/>
    <property type="evidence" value="ECO:0007669"/>
    <property type="project" value="TreeGrafter"/>
</dbReference>
<dbReference type="GO" id="GO:0005524">
    <property type="term" value="F:ATP binding"/>
    <property type="evidence" value="ECO:0007669"/>
    <property type="project" value="UniProtKB-KW"/>
</dbReference>
<dbReference type="GO" id="GO:0004618">
    <property type="term" value="F:phosphoglycerate kinase activity"/>
    <property type="evidence" value="ECO:0007669"/>
    <property type="project" value="UniProtKB-UniRule"/>
</dbReference>
<dbReference type="GO" id="GO:0006094">
    <property type="term" value="P:gluconeogenesis"/>
    <property type="evidence" value="ECO:0007669"/>
    <property type="project" value="TreeGrafter"/>
</dbReference>
<dbReference type="GO" id="GO:0006096">
    <property type="term" value="P:glycolytic process"/>
    <property type="evidence" value="ECO:0007669"/>
    <property type="project" value="UniProtKB-UniRule"/>
</dbReference>
<dbReference type="FunFam" id="3.40.50.1260:FF:000001">
    <property type="entry name" value="Phosphoglycerate kinase"/>
    <property type="match status" value="1"/>
</dbReference>
<dbReference type="FunFam" id="3.40.50.1260:FF:000002">
    <property type="entry name" value="Phosphoglycerate kinase"/>
    <property type="match status" value="1"/>
</dbReference>
<dbReference type="Gene3D" id="3.40.50.1260">
    <property type="entry name" value="Phosphoglycerate kinase, N-terminal domain"/>
    <property type="match status" value="2"/>
</dbReference>
<dbReference type="HAMAP" id="MF_00145">
    <property type="entry name" value="Phosphoglyc_kinase"/>
    <property type="match status" value="1"/>
</dbReference>
<dbReference type="InterPro" id="IPR001576">
    <property type="entry name" value="Phosphoglycerate_kinase"/>
</dbReference>
<dbReference type="InterPro" id="IPR015911">
    <property type="entry name" value="Phosphoglycerate_kinase_CS"/>
</dbReference>
<dbReference type="InterPro" id="IPR015824">
    <property type="entry name" value="Phosphoglycerate_kinase_N"/>
</dbReference>
<dbReference type="InterPro" id="IPR036043">
    <property type="entry name" value="Phosphoglycerate_kinase_sf"/>
</dbReference>
<dbReference type="PANTHER" id="PTHR11406">
    <property type="entry name" value="PHOSPHOGLYCERATE KINASE"/>
    <property type="match status" value="1"/>
</dbReference>
<dbReference type="PANTHER" id="PTHR11406:SF23">
    <property type="entry name" value="PHOSPHOGLYCERATE KINASE 1, CHLOROPLASTIC-RELATED"/>
    <property type="match status" value="1"/>
</dbReference>
<dbReference type="Pfam" id="PF00162">
    <property type="entry name" value="PGK"/>
    <property type="match status" value="1"/>
</dbReference>
<dbReference type="PIRSF" id="PIRSF000724">
    <property type="entry name" value="Pgk"/>
    <property type="match status" value="1"/>
</dbReference>
<dbReference type="PRINTS" id="PR00477">
    <property type="entry name" value="PHGLYCKINASE"/>
</dbReference>
<dbReference type="SUPFAM" id="SSF53748">
    <property type="entry name" value="Phosphoglycerate kinase"/>
    <property type="match status" value="1"/>
</dbReference>
<dbReference type="PROSITE" id="PS00111">
    <property type="entry name" value="PGLYCERATE_KINASE"/>
    <property type="match status" value="1"/>
</dbReference>
<name>PGK_NITOC</name>
<organism>
    <name type="scientific">Nitrosococcus oceani (strain ATCC 19707 / BCRC 17464 / JCM 30415 / NCIMB 11848 / C-107)</name>
    <dbReference type="NCBI Taxonomy" id="323261"/>
    <lineage>
        <taxon>Bacteria</taxon>
        <taxon>Pseudomonadati</taxon>
        <taxon>Pseudomonadota</taxon>
        <taxon>Gammaproteobacteria</taxon>
        <taxon>Chromatiales</taxon>
        <taxon>Chromatiaceae</taxon>
        <taxon>Nitrosococcus</taxon>
    </lineage>
</organism>
<sequence>MPILKMSELDLAGKRVLIREDLNVPLKNGEITDDTRIRASLPSIQQAMQAGAKVMVMSHLGRPTEGEFDAAFSLAPVAGYLSHLLGQEVRLAPDWLEGMAVEKGQLVLCENVRFNRGEKKNDEALAKKMAALCDIYVMDAFGSAHRAQASTHGVAKYAPVACAGPLLAGELEALGKALENPARPLVAIVGGSKVSTKLTVLESLSQVVDQLIVGGGIANTFIAAADYNVGKSLYEADLVGTAKQLRTAAQEGGGDIPLPVDVVCGQEFSENAEAVLKRIGKVTDEDMIFDIGPETSKHFAEILKGAGTIVWNGPVGVFEFDQFGEGTKALALAIAESPAFSIAGGGDTLAAVAKYGVGDQVSYISTGGGAFLEFLEGKQLPAVAILEERASQ</sequence>
<reference key="1">
    <citation type="journal article" date="2006" name="Appl. Environ. Microbiol.">
        <title>Complete genome sequence of the marine, chemolithoautotrophic, ammonia-oxidizing bacterium Nitrosococcus oceani ATCC 19707.</title>
        <authorList>
            <person name="Klotz M.G."/>
            <person name="Arp D.J."/>
            <person name="Chain P.S.G."/>
            <person name="El-Sheikh A.F."/>
            <person name="Hauser L.J."/>
            <person name="Hommes N.G."/>
            <person name="Larimer F.W."/>
            <person name="Malfatti S.A."/>
            <person name="Norton J.M."/>
            <person name="Poret-Peterson A.T."/>
            <person name="Vergez L.M."/>
            <person name="Ward B.B."/>
        </authorList>
    </citation>
    <scope>NUCLEOTIDE SEQUENCE [LARGE SCALE GENOMIC DNA]</scope>
    <source>
        <strain>ATCC 19707 / BCRC 17464 / JCM 30415 / NCIMB 11848 / C-107</strain>
    </source>
</reference>
<proteinExistence type="inferred from homology"/>
<gene>
    <name evidence="1" type="primary">pgk</name>
    <name type="ordered locus">Noc_2806</name>
</gene>
<comment type="catalytic activity">
    <reaction evidence="1">
        <text>(2R)-3-phosphoglycerate + ATP = (2R)-3-phospho-glyceroyl phosphate + ADP</text>
        <dbReference type="Rhea" id="RHEA:14801"/>
        <dbReference type="ChEBI" id="CHEBI:30616"/>
        <dbReference type="ChEBI" id="CHEBI:57604"/>
        <dbReference type="ChEBI" id="CHEBI:58272"/>
        <dbReference type="ChEBI" id="CHEBI:456216"/>
        <dbReference type="EC" id="2.7.2.3"/>
    </reaction>
</comment>
<comment type="pathway">
    <text evidence="1">Carbohydrate degradation; glycolysis; pyruvate from D-glyceraldehyde 3-phosphate: step 2/5.</text>
</comment>
<comment type="subunit">
    <text evidence="1">Monomer.</text>
</comment>
<comment type="subcellular location">
    <subcellularLocation>
        <location evidence="1">Cytoplasm</location>
    </subcellularLocation>
</comment>
<comment type="similarity">
    <text evidence="1">Belongs to the phosphoglycerate kinase family.</text>
</comment>
<feature type="chain" id="PRO_1000058022" description="Phosphoglycerate kinase">
    <location>
        <begin position="1"/>
        <end position="392"/>
    </location>
</feature>
<feature type="binding site" evidence="1">
    <location>
        <begin position="21"/>
        <end position="23"/>
    </location>
    <ligand>
        <name>substrate</name>
    </ligand>
</feature>
<feature type="binding site" evidence="1">
    <location>
        <position position="36"/>
    </location>
    <ligand>
        <name>substrate</name>
    </ligand>
</feature>
<feature type="binding site" evidence="1">
    <location>
        <begin position="59"/>
        <end position="62"/>
    </location>
    <ligand>
        <name>substrate</name>
    </ligand>
</feature>
<feature type="binding site" evidence="1">
    <location>
        <position position="113"/>
    </location>
    <ligand>
        <name>substrate</name>
    </ligand>
</feature>
<feature type="binding site" evidence="1">
    <location>
        <position position="146"/>
    </location>
    <ligand>
        <name>substrate</name>
    </ligand>
</feature>
<feature type="binding site" evidence="1">
    <location>
        <position position="197"/>
    </location>
    <ligand>
        <name>ATP</name>
        <dbReference type="ChEBI" id="CHEBI:30616"/>
    </ligand>
</feature>
<feature type="binding site" evidence="1">
    <location>
        <position position="319"/>
    </location>
    <ligand>
        <name>ATP</name>
        <dbReference type="ChEBI" id="CHEBI:30616"/>
    </ligand>
</feature>
<feature type="binding site" evidence="1">
    <location>
        <begin position="345"/>
        <end position="348"/>
    </location>
    <ligand>
        <name>ATP</name>
        <dbReference type="ChEBI" id="CHEBI:30616"/>
    </ligand>
</feature>
<accession>Q3J7E3</accession>
<protein>
    <recommendedName>
        <fullName evidence="1">Phosphoglycerate kinase</fullName>
        <ecNumber evidence="1">2.7.2.3</ecNumber>
    </recommendedName>
</protein>